<proteinExistence type="evidence at protein level"/>
<feature type="initiator methionine" description="Removed" evidence="3 4">
    <location>
        <position position="1"/>
    </location>
</feature>
<feature type="chain" id="PRO_0000075367" description="FKBP-type 22 kDa peptidyl-prolyl cis-trans isomerase">
    <location>
        <begin position="2"/>
        <end position="206"/>
    </location>
</feature>
<feature type="domain" description="PPIase FKBP-type" evidence="1">
    <location>
        <begin position="120"/>
        <end position="206"/>
    </location>
</feature>
<reference key="1">
    <citation type="journal article" date="1995" name="Nucleic Acids Res.">
        <title>Analysis of the Escherichia coli genome VI: DNA sequence of the region from 92.8 through 100 minutes.</title>
        <authorList>
            <person name="Burland V.D."/>
            <person name="Plunkett G. III"/>
            <person name="Sofia H.J."/>
            <person name="Daniels D.L."/>
            <person name="Blattner F.R."/>
        </authorList>
    </citation>
    <scope>NUCLEOTIDE SEQUENCE [LARGE SCALE GENOMIC DNA]</scope>
    <scope>SUBCELLULAR LOCATION</scope>
    <source>
        <strain>K12 / MG1655 / ATCC 47076</strain>
    </source>
</reference>
<reference key="2">
    <citation type="journal article" date="1997" name="Science">
        <title>The complete genome sequence of Escherichia coli K-12.</title>
        <authorList>
            <person name="Blattner F.R."/>
            <person name="Plunkett G. III"/>
            <person name="Bloch C.A."/>
            <person name="Perna N.T."/>
            <person name="Burland V."/>
            <person name="Riley M."/>
            <person name="Collado-Vides J."/>
            <person name="Glasner J.D."/>
            <person name="Rode C.K."/>
            <person name="Mayhew G.F."/>
            <person name="Gregor J."/>
            <person name="Davis N.W."/>
            <person name="Kirkpatrick H.A."/>
            <person name="Goeden M.A."/>
            <person name="Rose D.J."/>
            <person name="Mau B."/>
            <person name="Shao Y."/>
        </authorList>
    </citation>
    <scope>NUCLEOTIDE SEQUENCE [LARGE SCALE GENOMIC DNA]</scope>
    <source>
        <strain>K12 / MG1655 / ATCC 47076</strain>
    </source>
</reference>
<reference key="3">
    <citation type="journal article" date="2006" name="Mol. Syst. Biol.">
        <title>Highly accurate genome sequences of Escherichia coli K-12 strains MG1655 and W3110.</title>
        <authorList>
            <person name="Hayashi K."/>
            <person name="Morooka N."/>
            <person name="Yamamoto Y."/>
            <person name="Fujita K."/>
            <person name="Isono K."/>
            <person name="Choi S."/>
            <person name="Ohtsubo E."/>
            <person name="Baba T."/>
            <person name="Wanner B.L."/>
            <person name="Mori H."/>
            <person name="Horiuchi T."/>
        </authorList>
    </citation>
    <scope>NUCLEOTIDE SEQUENCE [LARGE SCALE GENOMIC DNA]</scope>
    <source>
        <strain>K12 / W3110 / ATCC 27325 / DSM 5911</strain>
    </source>
</reference>
<reference key="4">
    <citation type="journal article" date="1996" name="J. Biol. Chem.">
        <title>Isolation and amino acid sequence of a new 22-kDa FKBP-like peptidyl-prolyl cis/trans-isomerase of Escherichia coli. Similarity to Mip-like proteins of pathogenic bacteria.</title>
        <authorList>
            <person name="Rahfeld J.-U."/>
            <person name="Ruecknagel P."/>
            <person name="Stoller G."/>
            <person name="Hornes S.M."/>
            <person name="Schierhorn A."/>
            <person name="Young K.D."/>
            <person name="Fischer G."/>
        </authorList>
    </citation>
    <scope>PROTEIN SEQUENCE OF 2-206</scope>
    <scope>MASS SPECTROMETRY</scope>
    <scope>ACTIVITY REGULATION</scope>
    <scope>SUBCELLULAR LOCATION</scope>
    <scope>SUBUNIT</scope>
</reference>
<reference key="5">
    <citation type="journal article" date="1997" name="Electrophoresis">
        <title>Comparing the predicted and observed properties of proteins encoded in the genome of Escherichia coli K-12.</title>
        <authorList>
            <person name="Link A.J."/>
            <person name="Robison K."/>
            <person name="Church G.M."/>
        </authorList>
    </citation>
    <scope>PROTEIN SEQUENCE OF 2-12</scope>
    <source>
        <strain>K12 / EMG2</strain>
    </source>
</reference>
<protein>
    <recommendedName>
        <fullName evidence="5">FKBP-type 22 kDa peptidyl-prolyl cis-trans isomerase</fullName>
        <shortName>FKBP22</shortName>
        <shortName>PPIase</shortName>
        <ecNumber evidence="3">5.2.1.8</ecNumber>
    </recommendedName>
    <alternativeName>
        <fullName>Rotamase</fullName>
    </alternativeName>
</protein>
<keyword id="KW-0963">Cytoplasm</keyword>
<keyword id="KW-0903">Direct protein sequencing</keyword>
<keyword id="KW-0413">Isomerase</keyword>
<keyword id="KW-0574">Periplasm</keyword>
<keyword id="KW-1185">Reference proteome</keyword>
<keyword id="KW-0697">Rotamase</keyword>
<evidence type="ECO:0000255" key="1">
    <source>
        <dbReference type="PROSITE-ProRule" id="PRU00277"/>
    </source>
</evidence>
<evidence type="ECO:0000269" key="2">
    <source>
    </source>
</evidence>
<evidence type="ECO:0000269" key="3">
    <source>
    </source>
</evidence>
<evidence type="ECO:0000269" key="4">
    <source>
    </source>
</evidence>
<evidence type="ECO:0000303" key="5">
    <source>
    </source>
</evidence>
<evidence type="ECO:0000305" key="6"/>
<organism>
    <name type="scientific">Escherichia coli (strain K12)</name>
    <dbReference type="NCBI Taxonomy" id="83333"/>
    <lineage>
        <taxon>Bacteria</taxon>
        <taxon>Pseudomonadati</taxon>
        <taxon>Pseudomonadota</taxon>
        <taxon>Gammaproteobacteria</taxon>
        <taxon>Enterobacterales</taxon>
        <taxon>Enterobacteriaceae</taxon>
        <taxon>Escherichia</taxon>
    </lineage>
</organism>
<gene>
    <name type="primary">fklB</name>
    <name type="synonym">ytfC</name>
    <name type="ordered locus">b4207</name>
    <name type="ordered locus">JW5746</name>
</gene>
<name>FKBB_ECOLI</name>
<accession>P0A9L3</accession>
<accession>P39311</accession>
<accession>P76801</accession>
<accession>Q2M698</accession>
<accession>Q47717</accession>
<comment type="function">
    <text evidence="3 6">PPIases accelerate the folding of proteins (Probable). Catalyzes the cis-trans isomerization of proline imidic peptide bonds in oligopeptides (PubMed:8703024). Displays a preference for substrates with a lysyl residue in the P1 position (PubMed:8703024).</text>
</comment>
<comment type="catalytic activity">
    <reaction>
        <text>[protein]-peptidylproline (omega=180) = [protein]-peptidylproline (omega=0)</text>
        <dbReference type="Rhea" id="RHEA:16237"/>
        <dbReference type="Rhea" id="RHEA-COMP:10747"/>
        <dbReference type="Rhea" id="RHEA-COMP:10748"/>
        <dbReference type="ChEBI" id="CHEBI:83833"/>
        <dbReference type="ChEBI" id="CHEBI:83834"/>
        <dbReference type="EC" id="5.2.1.8"/>
    </reaction>
</comment>
<comment type="activity regulation">
    <text evidence="3">Strongly inhibited by FK506.</text>
</comment>
<comment type="subunit">
    <text evidence="3">Homodimer.</text>
</comment>
<comment type="interaction">
    <interactant intactId="EBI-369295">
        <id>P0A9L3</id>
    </interactant>
    <interactant intactId="EBI-369295">
        <id>P0A9L3</id>
        <label>fklB</label>
    </interactant>
    <organismsDiffer>false</organismsDiffer>
    <experiments>3</experiments>
</comment>
<comment type="subcellular location">
    <subcellularLocation>
        <location>Cytoplasm</location>
    </subcellularLocation>
    <subcellularLocation>
        <location evidence="2 3">Periplasm</location>
    </subcellularLocation>
</comment>
<comment type="mass spectrometry"/>
<comment type="similarity">
    <text evidence="6">Belongs to the FKBP-type PPIase family.</text>
</comment>
<comment type="sequence caution" evidence="6">
    <conflict type="erroneous initiation">
        <sequence resource="EMBL-CDS" id="AAA97103"/>
    </conflict>
    <text>Extended N-terminus.</text>
</comment>
<sequence>MTTPTFDTIEAQASYGIGLQVGQQLSESGLEGLLPEALVAGIADALEGKHPAVPVDVVHRALREIHERADAVRRQRFQAMAAEGVKYLEENAKKEGVNSTESGLQFRVINQGEGAIPARTDRVRVHYTGKLIDGTVFDSSVARGEPAEFPVNGVIPGWIEALTLMPVGSKWELTIPQELAYGERGAGASIPPFSTLVFEVELLEIL</sequence>
<dbReference type="EC" id="5.2.1.8" evidence="3"/>
<dbReference type="EMBL" id="U14003">
    <property type="protein sequence ID" value="AAA97103.1"/>
    <property type="status" value="ALT_INIT"/>
    <property type="molecule type" value="Genomic_DNA"/>
</dbReference>
<dbReference type="EMBL" id="U00096">
    <property type="protein sequence ID" value="AAC77164.2"/>
    <property type="molecule type" value="Genomic_DNA"/>
</dbReference>
<dbReference type="EMBL" id="AP009048">
    <property type="protein sequence ID" value="BAE78208.1"/>
    <property type="molecule type" value="Genomic_DNA"/>
</dbReference>
<dbReference type="RefSeq" id="NP_418628.4">
    <property type="nucleotide sequence ID" value="NC_000913.3"/>
</dbReference>
<dbReference type="RefSeq" id="WP_000211225.1">
    <property type="nucleotide sequence ID" value="NZ_SSUV01000014.1"/>
</dbReference>
<dbReference type="SMR" id="P0A9L3"/>
<dbReference type="BioGRID" id="4259639">
    <property type="interactions" value="21"/>
</dbReference>
<dbReference type="BioGRID" id="853018">
    <property type="interactions" value="5"/>
</dbReference>
<dbReference type="DIP" id="DIP-31854N"/>
<dbReference type="FunCoup" id="P0A9L3">
    <property type="interactions" value="609"/>
</dbReference>
<dbReference type="IntAct" id="P0A9L3">
    <property type="interactions" value="11"/>
</dbReference>
<dbReference type="MINT" id="P0A9L3"/>
<dbReference type="STRING" id="511145.b4207"/>
<dbReference type="jPOST" id="P0A9L3"/>
<dbReference type="PaxDb" id="511145-b4207"/>
<dbReference type="EnsemblBacteria" id="AAC77164">
    <property type="protein sequence ID" value="AAC77164"/>
    <property type="gene ID" value="b4207"/>
</dbReference>
<dbReference type="GeneID" id="93777614"/>
<dbReference type="GeneID" id="948726"/>
<dbReference type="KEGG" id="ecj:JW5746"/>
<dbReference type="KEGG" id="eco:b4207"/>
<dbReference type="KEGG" id="ecoc:C3026_22725"/>
<dbReference type="PATRIC" id="fig|1411691.4.peg.2494"/>
<dbReference type="EchoBASE" id="EB2396"/>
<dbReference type="eggNOG" id="COG0545">
    <property type="taxonomic scope" value="Bacteria"/>
</dbReference>
<dbReference type="HOGENOM" id="CLU_013615_0_3_6"/>
<dbReference type="InParanoid" id="P0A9L3"/>
<dbReference type="OMA" id="THYHGTF"/>
<dbReference type="OrthoDB" id="9814548at2"/>
<dbReference type="PhylomeDB" id="P0A9L3"/>
<dbReference type="BioCyc" id="EcoCyc:G7865-MONOMER"/>
<dbReference type="BioCyc" id="MetaCyc:G7865-MONOMER"/>
<dbReference type="BRENDA" id="5.2.1.8">
    <property type="organism ID" value="2026"/>
</dbReference>
<dbReference type="PRO" id="PR:P0A9L3"/>
<dbReference type="Proteomes" id="UP000000625">
    <property type="component" value="Chromosome"/>
</dbReference>
<dbReference type="GO" id="GO:0005829">
    <property type="term" value="C:cytosol"/>
    <property type="evidence" value="ECO:0000314"/>
    <property type="project" value="EcoCyc"/>
</dbReference>
<dbReference type="GO" id="GO:0042597">
    <property type="term" value="C:periplasmic space"/>
    <property type="evidence" value="ECO:0007669"/>
    <property type="project" value="UniProtKB-SubCell"/>
</dbReference>
<dbReference type="GO" id="GO:0005528">
    <property type="term" value="F:FK506 binding"/>
    <property type="evidence" value="ECO:0000314"/>
    <property type="project" value="EcoCyc"/>
</dbReference>
<dbReference type="GO" id="GO:0042802">
    <property type="term" value="F:identical protein binding"/>
    <property type="evidence" value="ECO:0000353"/>
    <property type="project" value="IntAct"/>
</dbReference>
<dbReference type="GO" id="GO:0003755">
    <property type="term" value="F:peptidyl-prolyl cis-trans isomerase activity"/>
    <property type="evidence" value="ECO:0000314"/>
    <property type="project" value="EcoCyc"/>
</dbReference>
<dbReference type="GO" id="GO:0042803">
    <property type="term" value="F:protein homodimerization activity"/>
    <property type="evidence" value="ECO:0000314"/>
    <property type="project" value="EcoCyc"/>
</dbReference>
<dbReference type="GO" id="GO:0061077">
    <property type="term" value="P:chaperone-mediated protein folding"/>
    <property type="evidence" value="ECO:0000315"/>
    <property type="project" value="EcoCyc"/>
</dbReference>
<dbReference type="FunFam" id="1.10.287.460:FF:000001">
    <property type="entry name" value="Peptidyl-prolyl cis-trans isomerase"/>
    <property type="match status" value="1"/>
</dbReference>
<dbReference type="FunFam" id="3.10.50.40:FF:000004">
    <property type="entry name" value="Peptidyl-prolyl cis-trans isomerase"/>
    <property type="match status" value="1"/>
</dbReference>
<dbReference type="Gene3D" id="3.10.50.40">
    <property type="match status" value="1"/>
</dbReference>
<dbReference type="Gene3D" id="1.10.287.460">
    <property type="entry name" value="Peptidyl-prolyl cis-trans isomerase, FKBP-type, N-terminal domain"/>
    <property type="match status" value="1"/>
</dbReference>
<dbReference type="InterPro" id="IPR046357">
    <property type="entry name" value="PPIase_dom_sf"/>
</dbReference>
<dbReference type="InterPro" id="IPR001179">
    <property type="entry name" value="PPIase_FKBP_dom"/>
</dbReference>
<dbReference type="InterPro" id="IPR000774">
    <property type="entry name" value="PPIase_FKBP_N"/>
</dbReference>
<dbReference type="InterPro" id="IPR036944">
    <property type="entry name" value="PPIase_FKBP_N_sf"/>
</dbReference>
<dbReference type="NCBIfam" id="NF008602">
    <property type="entry name" value="PRK11570.1"/>
    <property type="match status" value="1"/>
</dbReference>
<dbReference type="PANTHER" id="PTHR43811:SF23">
    <property type="entry name" value="FKBP-TYPE 22 KDA PEPTIDYL-PROLYL CIS-TRANS ISOMERASE"/>
    <property type="match status" value="1"/>
</dbReference>
<dbReference type="PANTHER" id="PTHR43811">
    <property type="entry name" value="FKBP-TYPE PEPTIDYL-PROLYL CIS-TRANS ISOMERASE FKPA"/>
    <property type="match status" value="1"/>
</dbReference>
<dbReference type="Pfam" id="PF00254">
    <property type="entry name" value="FKBP_C"/>
    <property type="match status" value="1"/>
</dbReference>
<dbReference type="Pfam" id="PF01346">
    <property type="entry name" value="FKBP_N"/>
    <property type="match status" value="1"/>
</dbReference>
<dbReference type="SUPFAM" id="SSF54534">
    <property type="entry name" value="FKBP-like"/>
    <property type="match status" value="1"/>
</dbReference>
<dbReference type="PROSITE" id="PS50059">
    <property type="entry name" value="FKBP_PPIASE"/>
    <property type="match status" value="1"/>
</dbReference>